<name>RL14_BACAH</name>
<proteinExistence type="inferred from homology"/>
<feature type="chain" id="PRO_1000055509" description="Large ribosomal subunit protein uL14">
    <location>
        <begin position="1"/>
        <end position="122"/>
    </location>
</feature>
<accession>A0R8J0</accession>
<evidence type="ECO:0000255" key="1">
    <source>
        <dbReference type="HAMAP-Rule" id="MF_01367"/>
    </source>
</evidence>
<evidence type="ECO:0000305" key="2"/>
<reference key="1">
    <citation type="journal article" date="2007" name="J. Bacteriol.">
        <title>The complete genome sequence of Bacillus thuringiensis Al Hakam.</title>
        <authorList>
            <person name="Challacombe J.F."/>
            <person name="Altherr M.R."/>
            <person name="Xie G."/>
            <person name="Bhotika S.S."/>
            <person name="Brown N."/>
            <person name="Bruce D."/>
            <person name="Campbell C.S."/>
            <person name="Campbell M.L."/>
            <person name="Chen J."/>
            <person name="Chertkov O."/>
            <person name="Cleland C."/>
            <person name="Dimitrijevic M."/>
            <person name="Doggett N.A."/>
            <person name="Fawcett J.J."/>
            <person name="Glavina T."/>
            <person name="Goodwin L.A."/>
            <person name="Green L.D."/>
            <person name="Han C.S."/>
            <person name="Hill K.K."/>
            <person name="Hitchcock P."/>
            <person name="Jackson P.J."/>
            <person name="Keim P."/>
            <person name="Kewalramani A.R."/>
            <person name="Longmire J."/>
            <person name="Lucas S."/>
            <person name="Malfatti S."/>
            <person name="Martinez D."/>
            <person name="McMurry K."/>
            <person name="Meincke L.J."/>
            <person name="Misra M."/>
            <person name="Moseman B.L."/>
            <person name="Mundt M."/>
            <person name="Munk A.C."/>
            <person name="Okinaka R.T."/>
            <person name="Parson-Quintana B."/>
            <person name="Reilly L.P."/>
            <person name="Richardson P."/>
            <person name="Robinson D.L."/>
            <person name="Saunders E."/>
            <person name="Tapia R."/>
            <person name="Tesmer J.G."/>
            <person name="Thayer N."/>
            <person name="Thompson L.S."/>
            <person name="Tice H."/>
            <person name="Ticknor L.O."/>
            <person name="Wills P.L."/>
            <person name="Gilna P."/>
            <person name="Brettin T.S."/>
        </authorList>
    </citation>
    <scope>NUCLEOTIDE SEQUENCE [LARGE SCALE GENOMIC DNA]</scope>
    <source>
        <strain>Al Hakam</strain>
    </source>
</reference>
<comment type="function">
    <text evidence="1">Binds to 23S rRNA. Forms part of two intersubunit bridges in the 70S ribosome.</text>
</comment>
<comment type="subunit">
    <text evidence="1">Part of the 50S ribosomal subunit. Forms a cluster with proteins L3 and L19. In the 70S ribosome, L14 and L19 interact and together make contacts with the 16S rRNA in bridges B5 and B8.</text>
</comment>
<comment type="similarity">
    <text evidence="1">Belongs to the universal ribosomal protein uL14 family.</text>
</comment>
<dbReference type="EMBL" id="CP000485">
    <property type="protein sequence ID" value="ABK83533.1"/>
    <property type="molecule type" value="Genomic_DNA"/>
</dbReference>
<dbReference type="RefSeq" id="WP_000615912.1">
    <property type="nucleotide sequence ID" value="NC_008600.1"/>
</dbReference>
<dbReference type="SMR" id="A0R8J0"/>
<dbReference type="GeneID" id="93010933"/>
<dbReference type="KEGG" id="btl:BALH_0118"/>
<dbReference type="HOGENOM" id="CLU_095071_2_1_9"/>
<dbReference type="GO" id="GO:0022625">
    <property type="term" value="C:cytosolic large ribosomal subunit"/>
    <property type="evidence" value="ECO:0007669"/>
    <property type="project" value="TreeGrafter"/>
</dbReference>
<dbReference type="GO" id="GO:0070180">
    <property type="term" value="F:large ribosomal subunit rRNA binding"/>
    <property type="evidence" value="ECO:0007669"/>
    <property type="project" value="TreeGrafter"/>
</dbReference>
<dbReference type="GO" id="GO:0003735">
    <property type="term" value="F:structural constituent of ribosome"/>
    <property type="evidence" value="ECO:0007669"/>
    <property type="project" value="InterPro"/>
</dbReference>
<dbReference type="GO" id="GO:0006412">
    <property type="term" value="P:translation"/>
    <property type="evidence" value="ECO:0007669"/>
    <property type="project" value="UniProtKB-UniRule"/>
</dbReference>
<dbReference type="CDD" id="cd00337">
    <property type="entry name" value="Ribosomal_uL14"/>
    <property type="match status" value="1"/>
</dbReference>
<dbReference type="FunFam" id="2.40.150.20:FF:000001">
    <property type="entry name" value="50S ribosomal protein L14"/>
    <property type="match status" value="1"/>
</dbReference>
<dbReference type="Gene3D" id="2.40.150.20">
    <property type="entry name" value="Ribosomal protein L14"/>
    <property type="match status" value="1"/>
</dbReference>
<dbReference type="HAMAP" id="MF_01367">
    <property type="entry name" value="Ribosomal_uL14"/>
    <property type="match status" value="1"/>
</dbReference>
<dbReference type="InterPro" id="IPR000218">
    <property type="entry name" value="Ribosomal_uL14"/>
</dbReference>
<dbReference type="InterPro" id="IPR005745">
    <property type="entry name" value="Ribosomal_uL14_bac-type"/>
</dbReference>
<dbReference type="InterPro" id="IPR019972">
    <property type="entry name" value="Ribosomal_uL14_CS"/>
</dbReference>
<dbReference type="InterPro" id="IPR036853">
    <property type="entry name" value="Ribosomal_uL14_sf"/>
</dbReference>
<dbReference type="NCBIfam" id="TIGR01067">
    <property type="entry name" value="rplN_bact"/>
    <property type="match status" value="1"/>
</dbReference>
<dbReference type="PANTHER" id="PTHR11761">
    <property type="entry name" value="50S/60S RIBOSOMAL PROTEIN L14/L23"/>
    <property type="match status" value="1"/>
</dbReference>
<dbReference type="PANTHER" id="PTHR11761:SF3">
    <property type="entry name" value="LARGE RIBOSOMAL SUBUNIT PROTEIN UL14M"/>
    <property type="match status" value="1"/>
</dbReference>
<dbReference type="Pfam" id="PF00238">
    <property type="entry name" value="Ribosomal_L14"/>
    <property type="match status" value="1"/>
</dbReference>
<dbReference type="SMART" id="SM01374">
    <property type="entry name" value="Ribosomal_L14"/>
    <property type="match status" value="1"/>
</dbReference>
<dbReference type="SUPFAM" id="SSF50193">
    <property type="entry name" value="Ribosomal protein L14"/>
    <property type="match status" value="1"/>
</dbReference>
<dbReference type="PROSITE" id="PS00049">
    <property type="entry name" value="RIBOSOMAL_L14"/>
    <property type="match status" value="1"/>
</dbReference>
<organism>
    <name type="scientific">Bacillus thuringiensis (strain Al Hakam)</name>
    <dbReference type="NCBI Taxonomy" id="412694"/>
    <lineage>
        <taxon>Bacteria</taxon>
        <taxon>Bacillati</taxon>
        <taxon>Bacillota</taxon>
        <taxon>Bacilli</taxon>
        <taxon>Bacillales</taxon>
        <taxon>Bacillaceae</taxon>
        <taxon>Bacillus</taxon>
        <taxon>Bacillus cereus group</taxon>
    </lineage>
</organism>
<keyword id="KW-0687">Ribonucleoprotein</keyword>
<keyword id="KW-0689">Ribosomal protein</keyword>
<keyword id="KW-0694">RNA-binding</keyword>
<keyword id="KW-0699">rRNA-binding</keyword>
<gene>
    <name evidence="1" type="primary">rplN</name>
    <name type="ordered locus">BALH_0118</name>
</gene>
<sequence length="122" mass="13120">MIQQESRLKVADNSGARELLTIKVLGGSGRKYANIGDIIVATVKQATPGGVVKKGDVVKAVVVRTKSGARRPDGSYIKFDENAAVIIKDDKSPRGTRIFGPVARELRDSNFMKIVSLAPEVL</sequence>
<protein>
    <recommendedName>
        <fullName evidence="1">Large ribosomal subunit protein uL14</fullName>
    </recommendedName>
    <alternativeName>
        <fullName evidence="2">50S ribosomal protein L14</fullName>
    </alternativeName>
</protein>